<reference key="1">
    <citation type="submission" date="2009-02" db="EMBL/GenBank/DDBJ databases">
        <title>Genome sequence of Bacillus cereus 03BB102.</title>
        <authorList>
            <person name="Dodson R.J."/>
            <person name="Jackson P."/>
            <person name="Munk A.C."/>
            <person name="Brettin T."/>
            <person name="Bruce D."/>
            <person name="Detter C."/>
            <person name="Tapia R."/>
            <person name="Han C."/>
            <person name="Sutton G."/>
            <person name="Sims D."/>
        </authorList>
    </citation>
    <scope>NUCLEOTIDE SEQUENCE [LARGE SCALE GENOMIC DNA]</scope>
    <source>
        <strain>03BB102</strain>
    </source>
</reference>
<sequence>MTAIRYEFIKTCKQTGARLGRVHTPHGSFDTPTFMPVGTLATVKTMSPEELKAMDSGIILSNTYHLWLRPGHEIIREAGGLHKFMNWDRAILTDSGGFQVFSLSDFRRIEEEGVHFRNHLNGDKLFLSPEKAMEIQNALGSDIMMAFDECPPFPATFEYMKKSVERTSRWAERCLKAHERPQDQGLFGIVQGGEFEELRRQSAKDLVSMDFPGYAVGGLSVGEPKDIMNRVLEFTTPLLPDNKPRYLMGVGSPDSLIDGAIRGIDMFDCVLPTRIARNGTCMTSEGRLVVKNAKFARDFGPLDPNCDCYTCKNYSRAYIRHLMKCDETFGIRLTSYHNLHFLLNLMEQVRQAIREDRLGDFREEFFEQYGFNKPNAKNF</sequence>
<protein>
    <recommendedName>
        <fullName evidence="1">Queuine tRNA-ribosyltransferase</fullName>
        <ecNumber evidence="1">2.4.2.29</ecNumber>
    </recommendedName>
    <alternativeName>
        <fullName evidence="1">Guanine insertion enzyme</fullName>
    </alternativeName>
    <alternativeName>
        <fullName evidence="1">tRNA-guanine transglycosylase</fullName>
    </alternativeName>
</protein>
<gene>
    <name evidence="1" type="primary">tgt</name>
    <name type="ordered locus">BCA_4528</name>
</gene>
<comment type="function">
    <text evidence="1">Catalyzes the base-exchange of a guanine (G) residue with the queuine precursor 7-aminomethyl-7-deazaguanine (PreQ1) at position 34 (anticodon wobble position) in tRNAs with GU(N) anticodons (tRNA-Asp, -Asn, -His and -Tyr). Catalysis occurs through a double-displacement mechanism. The nucleophile active site attacks the C1' of nucleotide 34 to detach the guanine base from the RNA, forming a covalent enzyme-RNA intermediate. The proton acceptor active site deprotonates the incoming PreQ1, allowing a nucleophilic attack on the C1' of the ribose to form the product. After dissociation, two additional enzymatic reactions on the tRNA convert PreQ1 to queuine (Q), resulting in the hypermodified nucleoside queuosine (7-(((4,5-cis-dihydroxy-2-cyclopenten-1-yl)amino)methyl)-7-deazaguanosine).</text>
</comment>
<comment type="catalytic activity">
    <reaction evidence="1">
        <text>7-aminomethyl-7-carbaguanine + guanosine(34) in tRNA = 7-aminomethyl-7-carbaguanosine(34) in tRNA + guanine</text>
        <dbReference type="Rhea" id="RHEA:24104"/>
        <dbReference type="Rhea" id="RHEA-COMP:10341"/>
        <dbReference type="Rhea" id="RHEA-COMP:10342"/>
        <dbReference type="ChEBI" id="CHEBI:16235"/>
        <dbReference type="ChEBI" id="CHEBI:58703"/>
        <dbReference type="ChEBI" id="CHEBI:74269"/>
        <dbReference type="ChEBI" id="CHEBI:82833"/>
        <dbReference type="EC" id="2.4.2.29"/>
    </reaction>
</comment>
<comment type="cofactor">
    <cofactor evidence="1">
        <name>Zn(2+)</name>
        <dbReference type="ChEBI" id="CHEBI:29105"/>
    </cofactor>
    <text evidence="1">Binds 1 zinc ion per subunit.</text>
</comment>
<comment type="pathway">
    <text evidence="1">tRNA modification; tRNA-queuosine biosynthesis.</text>
</comment>
<comment type="subunit">
    <text evidence="1">Homodimer. Within each dimer, one monomer is responsible for RNA recognition and catalysis, while the other monomer binds to the replacement base PreQ1.</text>
</comment>
<comment type="similarity">
    <text evidence="1">Belongs to the queuine tRNA-ribosyltransferase family.</text>
</comment>
<dbReference type="EC" id="2.4.2.29" evidence="1"/>
<dbReference type="EMBL" id="CP001407">
    <property type="protein sequence ID" value="ACO27778.1"/>
    <property type="molecule type" value="Genomic_DNA"/>
</dbReference>
<dbReference type="RefSeq" id="WP_000125362.1">
    <property type="nucleotide sequence ID" value="NZ_CP009318.1"/>
</dbReference>
<dbReference type="SMR" id="C1ESW1"/>
<dbReference type="GeneID" id="92798989"/>
<dbReference type="KEGG" id="bcx:BCA_4528"/>
<dbReference type="PATRIC" id="fig|572264.18.peg.4477"/>
<dbReference type="UniPathway" id="UPA00392"/>
<dbReference type="Proteomes" id="UP000002210">
    <property type="component" value="Chromosome"/>
</dbReference>
<dbReference type="GO" id="GO:0005829">
    <property type="term" value="C:cytosol"/>
    <property type="evidence" value="ECO:0007669"/>
    <property type="project" value="TreeGrafter"/>
</dbReference>
<dbReference type="GO" id="GO:0046872">
    <property type="term" value="F:metal ion binding"/>
    <property type="evidence" value="ECO:0007669"/>
    <property type="project" value="UniProtKB-KW"/>
</dbReference>
<dbReference type="GO" id="GO:0008479">
    <property type="term" value="F:tRNA-guanosine(34) queuine transglycosylase activity"/>
    <property type="evidence" value="ECO:0007669"/>
    <property type="project" value="UniProtKB-UniRule"/>
</dbReference>
<dbReference type="GO" id="GO:0008616">
    <property type="term" value="P:queuosine biosynthetic process"/>
    <property type="evidence" value="ECO:0007669"/>
    <property type="project" value="UniProtKB-UniRule"/>
</dbReference>
<dbReference type="GO" id="GO:0002099">
    <property type="term" value="P:tRNA wobble guanine modification"/>
    <property type="evidence" value="ECO:0007669"/>
    <property type="project" value="TreeGrafter"/>
</dbReference>
<dbReference type="GO" id="GO:0101030">
    <property type="term" value="P:tRNA-guanine transglycosylation"/>
    <property type="evidence" value="ECO:0007669"/>
    <property type="project" value="InterPro"/>
</dbReference>
<dbReference type="FunFam" id="3.20.20.105:FF:000001">
    <property type="entry name" value="Queuine tRNA-ribosyltransferase"/>
    <property type="match status" value="1"/>
</dbReference>
<dbReference type="Gene3D" id="3.20.20.105">
    <property type="entry name" value="Queuine tRNA-ribosyltransferase-like"/>
    <property type="match status" value="1"/>
</dbReference>
<dbReference type="HAMAP" id="MF_00168">
    <property type="entry name" value="Q_tRNA_Tgt"/>
    <property type="match status" value="1"/>
</dbReference>
<dbReference type="InterPro" id="IPR050076">
    <property type="entry name" value="ArchSynthase1/Queuine_TRR"/>
</dbReference>
<dbReference type="InterPro" id="IPR004803">
    <property type="entry name" value="TGT"/>
</dbReference>
<dbReference type="InterPro" id="IPR036511">
    <property type="entry name" value="TGT-like_sf"/>
</dbReference>
<dbReference type="InterPro" id="IPR002616">
    <property type="entry name" value="tRNA_ribo_trans-like"/>
</dbReference>
<dbReference type="NCBIfam" id="TIGR00430">
    <property type="entry name" value="Q_tRNA_tgt"/>
    <property type="match status" value="1"/>
</dbReference>
<dbReference type="NCBIfam" id="TIGR00449">
    <property type="entry name" value="tgt_general"/>
    <property type="match status" value="1"/>
</dbReference>
<dbReference type="PANTHER" id="PTHR46499">
    <property type="entry name" value="QUEUINE TRNA-RIBOSYLTRANSFERASE"/>
    <property type="match status" value="1"/>
</dbReference>
<dbReference type="PANTHER" id="PTHR46499:SF1">
    <property type="entry name" value="QUEUINE TRNA-RIBOSYLTRANSFERASE"/>
    <property type="match status" value="1"/>
</dbReference>
<dbReference type="Pfam" id="PF01702">
    <property type="entry name" value="TGT"/>
    <property type="match status" value="1"/>
</dbReference>
<dbReference type="SUPFAM" id="SSF51713">
    <property type="entry name" value="tRNA-guanine transglycosylase"/>
    <property type="match status" value="1"/>
</dbReference>
<evidence type="ECO:0000255" key="1">
    <source>
        <dbReference type="HAMAP-Rule" id="MF_00168"/>
    </source>
</evidence>
<name>TGT_BACC3</name>
<proteinExistence type="inferred from homology"/>
<organism>
    <name type="scientific">Bacillus cereus (strain 03BB102)</name>
    <dbReference type="NCBI Taxonomy" id="572264"/>
    <lineage>
        <taxon>Bacteria</taxon>
        <taxon>Bacillati</taxon>
        <taxon>Bacillota</taxon>
        <taxon>Bacilli</taxon>
        <taxon>Bacillales</taxon>
        <taxon>Bacillaceae</taxon>
        <taxon>Bacillus</taxon>
        <taxon>Bacillus cereus group</taxon>
    </lineage>
</organism>
<keyword id="KW-0328">Glycosyltransferase</keyword>
<keyword id="KW-0479">Metal-binding</keyword>
<keyword id="KW-0671">Queuosine biosynthesis</keyword>
<keyword id="KW-0808">Transferase</keyword>
<keyword id="KW-0819">tRNA processing</keyword>
<keyword id="KW-0862">Zinc</keyword>
<accession>C1ESW1</accession>
<feature type="chain" id="PRO_1000197979" description="Queuine tRNA-ribosyltransferase">
    <location>
        <begin position="1"/>
        <end position="379"/>
    </location>
</feature>
<feature type="region of interest" description="RNA binding" evidence="1">
    <location>
        <begin position="249"/>
        <end position="255"/>
    </location>
</feature>
<feature type="region of interest" description="RNA binding; important for wobble base 34 recognition" evidence="1">
    <location>
        <begin position="273"/>
        <end position="277"/>
    </location>
</feature>
<feature type="active site" description="Proton acceptor" evidence="1">
    <location>
        <position position="94"/>
    </location>
</feature>
<feature type="active site" description="Nucleophile" evidence="1">
    <location>
        <position position="268"/>
    </location>
</feature>
<feature type="binding site" evidence="1">
    <location>
        <begin position="94"/>
        <end position="98"/>
    </location>
    <ligand>
        <name>substrate</name>
    </ligand>
</feature>
<feature type="binding site" evidence="1">
    <location>
        <position position="148"/>
    </location>
    <ligand>
        <name>substrate</name>
    </ligand>
</feature>
<feature type="binding site" evidence="1">
    <location>
        <position position="191"/>
    </location>
    <ligand>
        <name>substrate</name>
    </ligand>
</feature>
<feature type="binding site" evidence="1">
    <location>
        <position position="218"/>
    </location>
    <ligand>
        <name>substrate</name>
    </ligand>
</feature>
<feature type="binding site" evidence="1">
    <location>
        <position position="306"/>
    </location>
    <ligand>
        <name>Zn(2+)</name>
        <dbReference type="ChEBI" id="CHEBI:29105"/>
    </ligand>
</feature>
<feature type="binding site" evidence="1">
    <location>
        <position position="308"/>
    </location>
    <ligand>
        <name>Zn(2+)</name>
        <dbReference type="ChEBI" id="CHEBI:29105"/>
    </ligand>
</feature>
<feature type="binding site" evidence="1">
    <location>
        <position position="311"/>
    </location>
    <ligand>
        <name>Zn(2+)</name>
        <dbReference type="ChEBI" id="CHEBI:29105"/>
    </ligand>
</feature>
<feature type="binding site" evidence="1">
    <location>
        <position position="337"/>
    </location>
    <ligand>
        <name>Zn(2+)</name>
        <dbReference type="ChEBI" id="CHEBI:29105"/>
    </ligand>
</feature>